<organism>
    <name type="scientific">Xanthomonas campestris pv. campestris (strain ATCC 33913 / DSM 3586 / NCPPB 528 / LMG 568 / P 25)</name>
    <dbReference type="NCBI Taxonomy" id="190485"/>
    <lineage>
        <taxon>Bacteria</taxon>
        <taxon>Pseudomonadati</taxon>
        <taxon>Pseudomonadota</taxon>
        <taxon>Gammaproteobacteria</taxon>
        <taxon>Lysobacterales</taxon>
        <taxon>Lysobacteraceae</taxon>
        <taxon>Xanthomonas</taxon>
    </lineage>
</organism>
<accession>P34027</accession>
<comment type="function">
    <text evidence="1">Inner membrane component of the type II secretion system required for the energy-dependent secretion of extracellular factors such as proteases and toxins from the periplasm. Plays a role in the complex assembly and recruits XpsM resulting in a stable complex in the inner membrane. Provides thus a link between the energy-providing XpsE protein in the cytoplasm and the rest of the T2SS machinery.</text>
</comment>
<comment type="subunit">
    <text evidence="1 2">Type II secretion system is composed of four main components: the outer membrane complex, the inner membrane complex, the cytoplasmic secretion ATPase and the periplasm-spanning pseudopilus (By similarity). Forms homodimers. Interacts with XpsM/GspM. Interacts with XpsE/GspE and XpsF/GspF (By similarity).</text>
</comment>
<comment type="subcellular location">
    <subcellularLocation>
        <location evidence="1">Cell inner membrane</location>
        <topology evidence="1">Single-pass membrane protein</topology>
    </subcellularLocation>
</comment>
<comment type="similarity">
    <text evidence="4">Belongs to the GSP L family.</text>
</comment>
<reference key="1">
    <citation type="submission" date="1993-04" db="EMBL/GenBank/DDBJ databases">
        <authorList>
            <person name="Hu N.-T.T."/>
            <person name="Hung M.-N."/>
            <person name="Wang K.C."/>
        </authorList>
    </citation>
    <scope>NUCLEOTIDE SEQUENCE [GENOMIC DNA]</scope>
    <source>
        <strain>Xc1701</strain>
    </source>
</reference>
<reference key="2">
    <citation type="journal article" date="2002" name="Nature">
        <title>Comparison of the genomes of two Xanthomonas pathogens with differing host specificities.</title>
        <authorList>
            <person name="da Silva A.C.R."/>
            <person name="Ferro J.A."/>
            <person name="Reinach F.C."/>
            <person name="Farah C.S."/>
            <person name="Furlan L.R."/>
            <person name="Quaggio R.B."/>
            <person name="Monteiro-Vitorello C.B."/>
            <person name="Van Sluys M.A."/>
            <person name="Almeida N.F. Jr."/>
            <person name="Alves L.M.C."/>
            <person name="do Amaral A.M."/>
            <person name="Bertolini M.C."/>
            <person name="Camargo L.E.A."/>
            <person name="Camarotte G."/>
            <person name="Cannavan F."/>
            <person name="Cardozo J."/>
            <person name="Chambergo F."/>
            <person name="Ciapina L.P."/>
            <person name="Cicarelli R.M.B."/>
            <person name="Coutinho L.L."/>
            <person name="Cursino-Santos J.R."/>
            <person name="El-Dorry H."/>
            <person name="Faria J.B."/>
            <person name="Ferreira A.J.S."/>
            <person name="Ferreira R.C.C."/>
            <person name="Ferro M.I.T."/>
            <person name="Formighieri E.F."/>
            <person name="Franco M.C."/>
            <person name="Greggio C.C."/>
            <person name="Gruber A."/>
            <person name="Katsuyama A.M."/>
            <person name="Kishi L.T."/>
            <person name="Leite R.P."/>
            <person name="Lemos E.G.M."/>
            <person name="Lemos M.V.F."/>
            <person name="Locali E.C."/>
            <person name="Machado M.A."/>
            <person name="Madeira A.M.B.N."/>
            <person name="Martinez-Rossi N.M."/>
            <person name="Martins E.C."/>
            <person name="Meidanis J."/>
            <person name="Menck C.F.M."/>
            <person name="Miyaki C.Y."/>
            <person name="Moon D.H."/>
            <person name="Moreira L.M."/>
            <person name="Novo M.T.M."/>
            <person name="Okura V.K."/>
            <person name="Oliveira M.C."/>
            <person name="Oliveira V.R."/>
            <person name="Pereira H.A."/>
            <person name="Rossi A."/>
            <person name="Sena J.A.D."/>
            <person name="Silva C."/>
            <person name="de Souza R.F."/>
            <person name="Spinola L.A.F."/>
            <person name="Takita M.A."/>
            <person name="Tamura R.E."/>
            <person name="Teixeira E.C."/>
            <person name="Tezza R.I.D."/>
            <person name="Trindade dos Santos M."/>
            <person name="Truffi D."/>
            <person name="Tsai S.M."/>
            <person name="White F.F."/>
            <person name="Setubal J.C."/>
            <person name="Kitajima J.P."/>
        </authorList>
    </citation>
    <scope>NUCLEOTIDE SEQUENCE [LARGE SCALE GENOMIC DNA]</scope>
    <source>
        <strain>ATCC 33913 / DSM 3586 / NCPPB 528 / LMG 568 / P 25</strain>
    </source>
</reference>
<evidence type="ECO:0000250" key="1">
    <source>
        <dbReference type="UniProtKB" id="P25060"/>
    </source>
</evidence>
<evidence type="ECO:0000250" key="2">
    <source>
        <dbReference type="UniProtKB" id="Q00514"/>
    </source>
</evidence>
<evidence type="ECO:0000255" key="3"/>
<evidence type="ECO:0000305" key="4"/>
<feature type="chain" id="PRO_0000207320" description="Type II secretion system protein L">
    <location>
        <begin position="1"/>
        <end position="373"/>
    </location>
</feature>
<feature type="topological domain" description="Cytoplasmic" evidence="1">
    <location>
        <begin position="1"/>
        <end position="214"/>
    </location>
</feature>
<feature type="transmembrane region" description="Helical" evidence="3">
    <location>
        <begin position="215"/>
        <end position="233"/>
    </location>
</feature>
<feature type="topological domain" description="Periplasmic" evidence="1">
    <location>
        <begin position="234"/>
        <end position="373"/>
    </location>
</feature>
<feature type="sequence conflict" description="In Ref. 1; AAC27382." evidence="4" ref="1">
    <original>Q</original>
    <variation>H</variation>
    <location>
        <position position="263"/>
    </location>
</feature>
<feature type="sequence conflict" description="In Ref. 1; AAC27382." evidence="4" ref="1">
    <original>H</original>
    <variation>R</variation>
    <location>
        <position position="334"/>
    </location>
</feature>
<proteinExistence type="inferred from homology"/>
<sequence>MTAWRDTLGRIGVRAMPGAGGFWRWWQQSLLAWLPQRWQWQLGLSQSRLLLQLDGEALQLLRQRDQTSDTVASLPWPVQPQEVNALLPTALEGLPQHWLLPASHALRRPLRLPAAAAARLQDVARFEIDRQTPFTADQVYFDARVLDVREDGQLDAELVVVPRRMIDGPAGVPEAWSNALSGIDVADARGAPLGVNLLPPARRLRRSDPMQRWNLLLAVAALVLLAVAGWLLLDNRRQAADDLRAQVQANAGRARQVAAERQQLLELVEGAAFFQEQRATRPTSVEIWDELSRRLPSGTYLEKFSVEGGQLQLIGLSKEASSLVRRLEGSPLWHTPSLTGVLQSDAGRNVDRFTITAELAGPDAKEAADAAQR</sequence>
<keyword id="KW-0997">Cell inner membrane</keyword>
<keyword id="KW-1003">Cell membrane</keyword>
<keyword id="KW-0472">Membrane</keyword>
<keyword id="KW-0653">Protein transport</keyword>
<keyword id="KW-1185">Reference proteome</keyword>
<keyword id="KW-0812">Transmembrane</keyword>
<keyword id="KW-1133">Transmembrane helix</keyword>
<keyword id="KW-0813">Transport</keyword>
<dbReference type="EMBL" id="L02630">
    <property type="protein sequence ID" value="AAC27382.1"/>
    <property type="molecule type" value="Genomic_DNA"/>
</dbReference>
<dbReference type="EMBL" id="AE008922">
    <property type="protein sequence ID" value="AAM39983.1"/>
    <property type="molecule type" value="Genomic_DNA"/>
</dbReference>
<dbReference type="PIR" id="T12063">
    <property type="entry name" value="T12063"/>
</dbReference>
<dbReference type="RefSeq" id="NP_636059.1">
    <property type="nucleotide sequence ID" value="NC_003902.1"/>
</dbReference>
<dbReference type="RefSeq" id="WP_011035907.1">
    <property type="nucleotide sequence ID" value="NC_003902.1"/>
</dbReference>
<dbReference type="SMR" id="P34027"/>
<dbReference type="IntAct" id="P34027">
    <property type="interactions" value="1"/>
</dbReference>
<dbReference type="MINT" id="P34027"/>
<dbReference type="STRING" id="190485.XCC0667"/>
<dbReference type="EnsemblBacteria" id="AAM39983">
    <property type="protein sequence ID" value="AAM39983"/>
    <property type="gene ID" value="XCC0667"/>
</dbReference>
<dbReference type="KEGG" id="xcc:XCC0667"/>
<dbReference type="PATRIC" id="fig|190485.4.peg.732"/>
<dbReference type="eggNOG" id="COG3166">
    <property type="taxonomic scope" value="Bacteria"/>
</dbReference>
<dbReference type="HOGENOM" id="CLU_049033_1_0_6"/>
<dbReference type="OrthoDB" id="5621075at2"/>
<dbReference type="Proteomes" id="UP000001010">
    <property type="component" value="Chromosome"/>
</dbReference>
<dbReference type="GO" id="GO:0005886">
    <property type="term" value="C:plasma membrane"/>
    <property type="evidence" value="ECO:0007669"/>
    <property type="project" value="UniProtKB-SubCell"/>
</dbReference>
<dbReference type="GO" id="GO:0015031">
    <property type="term" value="P:protein transport"/>
    <property type="evidence" value="ECO:0007669"/>
    <property type="project" value="UniProtKB-KW"/>
</dbReference>
<dbReference type="Gene3D" id="3.30.1490.300">
    <property type="match status" value="1"/>
</dbReference>
<dbReference type="InterPro" id="IPR043129">
    <property type="entry name" value="ATPase_NBD"/>
</dbReference>
<dbReference type="InterPro" id="IPR052534">
    <property type="entry name" value="Extracell_DNA_Util/SecSys_Comp"/>
</dbReference>
<dbReference type="InterPro" id="IPR007813">
    <property type="entry name" value="PilN"/>
</dbReference>
<dbReference type="PANTHER" id="PTHR40278">
    <property type="entry name" value="DNA UTILIZATION PROTEIN HOFN"/>
    <property type="match status" value="1"/>
</dbReference>
<dbReference type="PANTHER" id="PTHR40278:SF1">
    <property type="entry name" value="DNA UTILIZATION PROTEIN HOFN"/>
    <property type="match status" value="1"/>
</dbReference>
<dbReference type="Pfam" id="PF05137">
    <property type="entry name" value="PilN"/>
    <property type="match status" value="1"/>
</dbReference>
<dbReference type="SUPFAM" id="SSF53067">
    <property type="entry name" value="Actin-like ATPase domain"/>
    <property type="match status" value="1"/>
</dbReference>
<gene>
    <name type="primary">pefL</name>
    <name type="synonym">xpsL</name>
    <name type="ordered locus">XCC0667</name>
</gene>
<protein>
    <recommendedName>
        <fullName>Type II secretion system protein L</fullName>
        <shortName>T2SS protein L</shortName>
    </recommendedName>
    <alternativeName>
        <fullName>General secretion pathway protein L</fullName>
    </alternativeName>
</protein>
<name>GSPL_XANCP</name>